<accession>P0DPZ9</accession>
<dbReference type="SMR" id="P0DPZ9"/>
<dbReference type="GO" id="GO:0005576">
    <property type="term" value="C:extracellular region"/>
    <property type="evidence" value="ECO:0007669"/>
    <property type="project" value="UniProtKB-SubCell"/>
</dbReference>
<dbReference type="GO" id="GO:0090729">
    <property type="term" value="F:toxin activity"/>
    <property type="evidence" value="ECO:0007669"/>
    <property type="project" value="UniProtKB-KW"/>
</dbReference>
<dbReference type="Gene3D" id="2.20.20.160">
    <property type="match status" value="1"/>
</dbReference>
<organism>
    <name type="scientific">Scolopendra morsitans</name>
    <name type="common">Tanzanian blue ringleg centipede</name>
    <dbReference type="NCBI Taxonomy" id="943129"/>
    <lineage>
        <taxon>Eukaryota</taxon>
        <taxon>Metazoa</taxon>
        <taxon>Ecdysozoa</taxon>
        <taxon>Arthropoda</taxon>
        <taxon>Myriapoda</taxon>
        <taxon>Chilopoda</taxon>
        <taxon>Pleurostigmophora</taxon>
        <taxon>Scolopendromorpha</taxon>
        <taxon>Scolopendridae</taxon>
        <taxon>Scolopendra</taxon>
    </lineage>
</organism>
<protein>
    <recommendedName>
        <fullName evidence="2">U-scoloptoxin(11)-Sm4a</fullName>
        <shortName evidence="2">U-SLPTX(11)-Sm4a</shortName>
    </recommendedName>
</protein>
<feature type="signal peptide" evidence="1">
    <location>
        <begin position="1"/>
        <end position="17"/>
    </location>
</feature>
<feature type="chain" id="PRO_0000446774" description="U-scoloptoxin(11)-Sm4a" evidence="3">
    <location>
        <begin position="18"/>
        <end position="89"/>
    </location>
</feature>
<sequence>MFFKLVLVSAVAIQALSMSILKSNVKRDQKQLQPCQENQICHEVPNSKYEAPPLVHCLCTGGKRCPMDTSLAHKTTGSGDTLMYLFRCI</sequence>
<evidence type="ECO:0000255" key="1"/>
<evidence type="ECO:0000303" key="2">
    <source>
    </source>
</evidence>
<evidence type="ECO:0000305" key="3"/>
<evidence type="ECO:0000305" key="4">
    <source>
    </source>
</evidence>
<name>TXB4A_SCOMO</name>
<comment type="subcellular location">
    <subcellularLocation>
        <location evidence="4">Secreted</location>
    </subcellularLocation>
</comment>
<comment type="tissue specificity">
    <text evidence="4">Expressed by the venom gland.</text>
</comment>
<comment type="PTM">
    <text evidence="3">Contains 3 disulfide bonds.</text>
</comment>
<comment type="similarity">
    <text evidence="3">Belongs to the scoloptoxin-11 family.</text>
</comment>
<comment type="caution">
    <text evidence="4">All S.morsitans family members described in 'Undeheim et al., 2014' have not been imported into UniProtKB. Please, refer to this paper to access them.</text>
</comment>
<comment type="online information" name="National Center for Biotechnology Information (NCBI)">
    <link uri="https://www.ncbi.nlm.nih.gov/nuccore/GASH01000126"/>
</comment>
<reference key="1">
    <citation type="journal article" date="2014" name="Mol. Biol. Evol.">
        <title>Clawing through evolution: toxin diversification and convergence in the ancient lineage Chilopoda (centipedes).</title>
        <authorList>
            <person name="Undheim E.A."/>
            <person name="Jones A."/>
            <person name="Clauser K.R."/>
            <person name="Holland J.W."/>
            <person name="Pineda S.S."/>
            <person name="King G.F."/>
            <person name="Fry B.G."/>
        </authorList>
    </citation>
    <scope>NUCLEOTIDE SEQUENCE [MRNA]</scope>
    <scope>NOMENCLATURE</scope>
    <source>
        <tissue>Venom gland</tissue>
    </source>
</reference>
<keyword id="KW-1015">Disulfide bond</keyword>
<keyword id="KW-0964">Secreted</keyword>
<keyword id="KW-0732">Signal</keyword>
<keyword id="KW-0800">Toxin</keyword>
<proteinExistence type="inferred from homology"/>